<accession>F2JXJ2</accession>
<accession>Q24K53</accession>
<feature type="chain" id="PRO_0000423013" description="Putative FAD-dependent oxidoreductase LodB">
    <location>
        <begin position="1"/>
        <end position="369"/>
    </location>
</feature>
<feature type="binding site" evidence="1">
    <location>
        <begin position="10"/>
        <end position="14"/>
    </location>
    <ligand>
        <name>FAD</name>
        <dbReference type="ChEBI" id="CHEBI:57692"/>
    </ligand>
</feature>
<feature type="binding site" evidence="1">
    <location>
        <position position="103"/>
    </location>
    <ligand>
        <name>FAD</name>
        <dbReference type="ChEBI" id="CHEBI:57692"/>
    </ligand>
</feature>
<protein>
    <recommendedName>
        <fullName>Putative FAD-dependent oxidoreductase LodB</fullName>
        <ecNumber>1.-.-.-</ecNumber>
    </recommendedName>
</protein>
<evidence type="ECO:0000250" key="1"/>
<evidence type="ECO:0000269" key="2">
    <source>
    </source>
</evidence>
<evidence type="ECO:0000305" key="3">
    <source>
    </source>
</evidence>
<comment type="function">
    <text evidence="2">Is required for lysine-epsilon oxidase (LOD) activity in M.mediterranea. May be involved in the generation of the quinonic cofactor of LodA, leading to the active form of LodA containing a tyrosine-derived quinone cofactor.</text>
</comment>
<comment type="cofactor">
    <cofactor evidence="1">
        <name>FAD</name>
        <dbReference type="ChEBI" id="CHEBI:57692"/>
    </cofactor>
    <text evidence="1">Binds 1 FAD per subunit.</text>
</comment>
<comment type="subcellular location">
    <subcellularLocation>
        <location evidence="2">Cytoplasm</location>
    </subcellularLocation>
</comment>
<comment type="induction">
    <text>Forms part of an operon with lodA.</text>
</comment>
<comment type="disruption phenotype">
    <text evidence="2">Cells lacking this gene do not show any lysine-epsilon oxidase activity.</text>
</comment>
<comment type="miscellaneous">
    <text evidence="3">The intracellular stability of LodB is dependent on the presence of LodA protein.</text>
</comment>
<dbReference type="EC" id="1.-.-.-"/>
<dbReference type="EMBL" id="AY968053">
    <property type="protein sequence ID" value="AAY33850.1"/>
    <property type="molecule type" value="Genomic_DNA"/>
</dbReference>
<dbReference type="EMBL" id="CP002583">
    <property type="protein sequence ID" value="ADZ91892.1"/>
    <property type="molecule type" value="Genomic_DNA"/>
</dbReference>
<dbReference type="RefSeq" id="WP_013661795.1">
    <property type="nucleotide sequence ID" value="NC_015276.1"/>
</dbReference>
<dbReference type="SMR" id="F2JXJ2"/>
<dbReference type="STRING" id="717774.Marme_2661"/>
<dbReference type="KEGG" id="mme:Marme_2661"/>
<dbReference type="PATRIC" id="fig|717774.3.peg.2747"/>
<dbReference type="eggNOG" id="COG0644">
    <property type="taxonomic scope" value="Bacteria"/>
</dbReference>
<dbReference type="HOGENOM" id="CLU_024648_6_2_6"/>
<dbReference type="OrthoDB" id="6310849at2"/>
<dbReference type="Proteomes" id="UP000001062">
    <property type="component" value="Chromosome"/>
</dbReference>
<dbReference type="GO" id="GO:0005737">
    <property type="term" value="C:cytoplasm"/>
    <property type="evidence" value="ECO:0007669"/>
    <property type="project" value="UniProtKB-SubCell"/>
</dbReference>
<dbReference type="GO" id="GO:0071949">
    <property type="term" value="F:FAD binding"/>
    <property type="evidence" value="ECO:0007669"/>
    <property type="project" value="InterPro"/>
</dbReference>
<dbReference type="GO" id="GO:0016491">
    <property type="term" value="F:oxidoreductase activity"/>
    <property type="evidence" value="ECO:0007669"/>
    <property type="project" value="UniProtKB-KW"/>
</dbReference>
<dbReference type="Gene3D" id="3.30.9.100">
    <property type="match status" value="1"/>
</dbReference>
<dbReference type="Gene3D" id="3.50.50.60">
    <property type="entry name" value="FAD/NAD(P)-binding domain"/>
    <property type="match status" value="1"/>
</dbReference>
<dbReference type="InterPro" id="IPR002938">
    <property type="entry name" value="FAD-bd"/>
</dbReference>
<dbReference type="InterPro" id="IPR036188">
    <property type="entry name" value="FAD/NAD-bd_sf"/>
</dbReference>
<dbReference type="InterPro" id="IPR050816">
    <property type="entry name" value="Flavin-dep_Halogenase_NPB"/>
</dbReference>
<dbReference type="NCBIfam" id="NF038171">
    <property type="entry name" value="maturase_LodB"/>
    <property type="match status" value="1"/>
</dbReference>
<dbReference type="PANTHER" id="PTHR43747">
    <property type="entry name" value="FAD-BINDING PROTEIN"/>
    <property type="match status" value="1"/>
</dbReference>
<dbReference type="PANTHER" id="PTHR43747:SF1">
    <property type="entry name" value="SLR1998 PROTEIN"/>
    <property type="match status" value="1"/>
</dbReference>
<dbReference type="Pfam" id="PF01494">
    <property type="entry name" value="FAD_binding_3"/>
    <property type="match status" value="1"/>
</dbReference>
<dbReference type="PRINTS" id="PR00420">
    <property type="entry name" value="RNGMNOXGNASE"/>
</dbReference>
<dbReference type="SUPFAM" id="SSF51905">
    <property type="entry name" value="FAD/NAD(P)-binding domain"/>
    <property type="match status" value="1"/>
</dbReference>
<proteinExistence type="evidence at protein level"/>
<sequence>MESYDAIVIGGGPAGAASALSLLTHHNKRVLLLERGDFSQARIGEQVSHSIFDFLAYLDLPVSEFGESCFSPNYGKTSLWGSSIESHHLSMFATQGATYQLDRAAFDETLLMAFVERGGTVIPRCKQMKIEQSDSVWQVQFVHPEQGEQTVCCDYLVDASGRQSKLSAMLGVEPVMDDQLVGVGAFIRNPDNAFEQHQRIESCEYGWWYMAGLSSELAVVTCFTDMDIMREMRLNKASVWNQYLAETSAIADCVKGSETTHPKLWVKQAHSQYCTSELPDRFIAVGDAALSFDPVSSMGIGFAMTSACHSTRALVSDSKDAVLQYQQDMARIYQEYHVTKTRIYQREKRWPNQLFWQRRHAFSALQHAS</sequence>
<name>LODB_MARM1</name>
<keyword id="KW-0963">Cytoplasm</keyword>
<keyword id="KW-0274">FAD</keyword>
<keyword id="KW-0285">Flavoprotein</keyword>
<keyword id="KW-0560">Oxidoreductase</keyword>
<keyword id="KW-1185">Reference proteome</keyword>
<gene>
    <name type="primary">lodB</name>
    <name type="ordered locus">Marme_2661</name>
</gene>
<reference key="1">
    <citation type="journal article" date="2006" name="J. Bacteriol.">
        <title>The antimicrobial activity of marinocine, synthesized by Marinomonas mediterranea, is due to hydrogen peroxide generated by its lysine oxidase activity.</title>
        <authorList>
            <person name="Lucas-Elio P."/>
            <person name="Gomez D."/>
            <person name="Solano F."/>
            <person name="Sanchez-Amat A."/>
        </authorList>
    </citation>
    <scope>NUCLEOTIDE SEQUENCE [GENOMIC DNA]</scope>
    <source>
        <strain>ATCC 700492 / JCM 21426 / NBRC 103028 / MMB-1</strain>
    </source>
</reference>
<reference key="2">
    <citation type="journal article" date="2012" name="Stand. Genomic Sci.">
        <title>Complete genome sequence of the melanogenic marine bacterium Marinomonas mediterranea type strain (MMB-1(T)).</title>
        <authorList>
            <person name="Lucas-Elio P."/>
            <person name="Goodwin L."/>
            <person name="Woyke T."/>
            <person name="Pitluck S."/>
            <person name="Nolan M."/>
            <person name="Kyrpides N.C."/>
            <person name="Detter J.C."/>
            <person name="Copeland A."/>
            <person name="Teshima H."/>
            <person name="Bruce D."/>
            <person name="Detter C."/>
            <person name="Tapia R."/>
            <person name="Han S."/>
            <person name="Land M.L."/>
            <person name="Ivanova N."/>
            <person name="Mikhailova N."/>
            <person name="Johnston A.W."/>
            <person name="Sanchez-Amat A."/>
        </authorList>
    </citation>
    <scope>NUCLEOTIDE SEQUENCE [LARGE SCALE GENOMIC DNA]</scope>
    <source>
        <strain>ATCC 700492 / JCM 21426 / NBRC 103028 / MMB-1</strain>
    </source>
</reference>
<reference key="3">
    <citation type="journal article" date="2010" name="Mol. Microbiol.">
        <title>Both genes in the Marinomonas mediterranea lodAB operon are required for the expression of the antimicrobial protein lysine oxidase.</title>
        <authorList>
            <person name="Gomez D."/>
            <person name="Lucas-Elio P."/>
            <person name="Solano F."/>
            <person name="Sanchez-Amat A."/>
        </authorList>
    </citation>
    <scope>FUNCTION IN LODA MATURATION</scope>
    <scope>SUBCELLULAR LOCATION</scope>
    <scope>DISRUPTION PHENOTYPE</scope>
    <scope>OPERON STRUCTURE</scope>
    <source>
        <strain>ATCC 700492 / JCM 21426 / NBRC 103028 / MMB-1</strain>
    </source>
</reference>
<organism>
    <name type="scientific">Marinomonas mediterranea (strain ATCC 700492 / JCM 21426 / NBRC 103028 / MMB-1)</name>
    <dbReference type="NCBI Taxonomy" id="717774"/>
    <lineage>
        <taxon>Bacteria</taxon>
        <taxon>Pseudomonadati</taxon>
        <taxon>Pseudomonadota</taxon>
        <taxon>Gammaproteobacteria</taxon>
        <taxon>Oceanospirillales</taxon>
        <taxon>Oceanospirillaceae</taxon>
        <taxon>Marinomonas</taxon>
    </lineage>
</organism>